<reference key="1">
    <citation type="journal article" date="2002" name="Proc. Natl. Acad. Sci. U.S.A.">
        <title>The Brucella suis genome reveals fundamental similarities between animal and plant pathogens and symbionts.</title>
        <authorList>
            <person name="Paulsen I.T."/>
            <person name="Seshadri R."/>
            <person name="Nelson K.E."/>
            <person name="Eisen J.A."/>
            <person name="Heidelberg J.F."/>
            <person name="Read T.D."/>
            <person name="Dodson R.J."/>
            <person name="Umayam L.A."/>
            <person name="Brinkac L.M."/>
            <person name="Beanan M.J."/>
            <person name="Daugherty S.C."/>
            <person name="DeBoy R.T."/>
            <person name="Durkin A.S."/>
            <person name="Kolonay J.F."/>
            <person name="Madupu R."/>
            <person name="Nelson W.C."/>
            <person name="Ayodeji B."/>
            <person name="Kraul M."/>
            <person name="Shetty J."/>
            <person name="Malek J.A."/>
            <person name="Van Aken S.E."/>
            <person name="Riedmuller S."/>
            <person name="Tettelin H."/>
            <person name="Gill S.R."/>
            <person name="White O."/>
            <person name="Salzberg S.L."/>
            <person name="Hoover D.L."/>
            <person name="Lindler L.E."/>
            <person name="Halling S.M."/>
            <person name="Boyle S.M."/>
            <person name="Fraser C.M."/>
        </authorList>
    </citation>
    <scope>NUCLEOTIDE SEQUENCE [LARGE SCALE GENOMIC DNA]</scope>
    <source>
        <strain>1330</strain>
    </source>
</reference>
<reference key="2">
    <citation type="journal article" date="2011" name="J. Bacteriol.">
        <title>Revised genome sequence of Brucella suis 1330.</title>
        <authorList>
            <person name="Tae H."/>
            <person name="Shallom S."/>
            <person name="Settlage R."/>
            <person name="Preston D."/>
            <person name="Adams L.G."/>
            <person name="Garner H.R."/>
        </authorList>
    </citation>
    <scope>NUCLEOTIDE SEQUENCE [LARGE SCALE GENOMIC DNA]</scope>
    <source>
        <strain>1330</strain>
    </source>
</reference>
<sequence>MRHCDSFCELIPMKGCEAMLEWMIDQGAGREPADIVLKGGRFLDLITGELVESDIAICEDRIVGTFGTYRGKHEIDVSGRIVVPGFIDTHLHIESSQVTPHEFDRCVLPQGVTTAICDPHEIANVLGAEGIRFFLDSALETVMDIRVQLSSCVPATHMETSGVELLIDDLLPFADHPKVIGLAEFMNFPGVLAKDPECMAKLRAFQGRHIDGHAPLLRGLDLNGYIAAGIRTEHEATNAEEALEKLRKGMYVLVREGSVSKDLKALMPIITERHAQFLALCTDDRNPLDIADQGHLDYLIRTAIAGGVEPLAIYRAASVSAARAFGLFDRGLVAPGQRADLVVVDSLEGCHAEIVLSAGRVVSEALFAARKPVAEVGRNSVKAPRVTASNFRSQSNSGKTRAIGIVPGKIITQNLEFDLKVGPNGVEPDLERDVVKVAVIERHGKNGNIATGFVHGFGLKAGAIASTVSHDSHNICVVGASDEDIATAANRLGEIEGGFVVVRDGKVLAEMPLPIAGLMSTEPYETVREALRKLRHAAEDLGSVLEEPFLQLAFIALPVIPHLKITDRGLVDVDKFEFVGN</sequence>
<feature type="chain" id="PRO_0000142411" description="Adenine deaminase">
    <location>
        <begin position="1"/>
        <end position="581"/>
    </location>
</feature>
<gene>
    <name evidence="1" type="primary">ade</name>
    <name type="ordered locus">BRA0653</name>
    <name type="ordered locus">BS1330_II0647</name>
</gene>
<protein>
    <recommendedName>
        <fullName evidence="1">Adenine deaminase</fullName>
        <shortName evidence="1">Adenase</shortName>
        <shortName evidence="1">Adenine aminase</shortName>
        <ecNumber evidence="1">3.5.4.2</ecNumber>
    </recommendedName>
</protein>
<keyword id="KW-0378">Hydrolase</keyword>
<keyword id="KW-0464">Manganese</keyword>
<evidence type="ECO:0000255" key="1">
    <source>
        <dbReference type="HAMAP-Rule" id="MF_01518"/>
    </source>
</evidence>
<name>ADEC_BRUSU</name>
<accession>Q8FW12</accession>
<accession>G0KD30</accession>
<organism>
    <name type="scientific">Brucella suis biovar 1 (strain 1330)</name>
    <dbReference type="NCBI Taxonomy" id="204722"/>
    <lineage>
        <taxon>Bacteria</taxon>
        <taxon>Pseudomonadati</taxon>
        <taxon>Pseudomonadota</taxon>
        <taxon>Alphaproteobacteria</taxon>
        <taxon>Hyphomicrobiales</taxon>
        <taxon>Brucellaceae</taxon>
        <taxon>Brucella/Ochrobactrum group</taxon>
        <taxon>Brucella</taxon>
    </lineage>
</organism>
<comment type="catalytic activity">
    <reaction evidence="1">
        <text>adenine + H2O + H(+) = hypoxanthine + NH4(+)</text>
        <dbReference type="Rhea" id="RHEA:23688"/>
        <dbReference type="ChEBI" id="CHEBI:15377"/>
        <dbReference type="ChEBI" id="CHEBI:15378"/>
        <dbReference type="ChEBI" id="CHEBI:16708"/>
        <dbReference type="ChEBI" id="CHEBI:17368"/>
        <dbReference type="ChEBI" id="CHEBI:28938"/>
        <dbReference type="EC" id="3.5.4.2"/>
    </reaction>
</comment>
<comment type="cofactor">
    <cofactor evidence="1">
        <name>Mn(2+)</name>
        <dbReference type="ChEBI" id="CHEBI:29035"/>
    </cofactor>
</comment>
<comment type="similarity">
    <text evidence="1">Belongs to the metallo-dependent hydrolases superfamily. Adenine deaminase family.</text>
</comment>
<dbReference type="EC" id="3.5.4.2" evidence="1"/>
<dbReference type="EMBL" id="AE014292">
    <property type="protein sequence ID" value="AAN33842.1"/>
    <property type="molecule type" value="Genomic_DNA"/>
</dbReference>
<dbReference type="EMBL" id="CP002998">
    <property type="protein sequence ID" value="AEM20118.1"/>
    <property type="molecule type" value="Genomic_DNA"/>
</dbReference>
<dbReference type="SMR" id="Q8FW12"/>
<dbReference type="KEGG" id="bms:BRA0653"/>
<dbReference type="KEGG" id="bsi:BS1330_II0647"/>
<dbReference type="PATRIC" id="fig|204722.22.peg.2344"/>
<dbReference type="HOGENOM" id="CLU_027935_0_0_5"/>
<dbReference type="Proteomes" id="UP000007104">
    <property type="component" value="Chromosome II"/>
</dbReference>
<dbReference type="GO" id="GO:0000034">
    <property type="term" value="F:adenine deaminase activity"/>
    <property type="evidence" value="ECO:0007669"/>
    <property type="project" value="UniProtKB-UniRule"/>
</dbReference>
<dbReference type="GO" id="GO:0006146">
    <property type="term" value="P:adenine catabolic process"/>
    <property type="evidence" value="ECO:0007669"/>
    <property type="project" value="InterPro"/>
</dbReference>
<dbReference type="CDD" id="cd01295">
    <property type="entry name" value="AdeC"/>
    <property type="match status" value="1"/>
</dbReference>
<dbReference type="Gene3D" id="3.20.20.140">
    <property type="entry name" value="Metal-dependent hydrolases"/>
    <property type="match status" value="1"/>
</dbReference>
<dbReference type="Gene3D" id="2.30.40.10">
    <property type="entry name" value="Urease, subunit C, domain 1"/>
    <property type="match status" value="1"/>
</dbReference>
<dbReference type="HAMAP" id="MF_01518">
    <property type="entry name" value="Adenine_deamin"/>
    <property type="match status" value="1"/>
</dbReference>
<dbReference type="InterPro" id="IPR006679">
    <property type="entry name" value="Adenine_deam"/>
</dbReference>
<dbReference type="InterPro" id="IPR026912">
    <property type="entry name" value="Adenine_deam_C"/>
</dbReference>
<dbReference type="InterPro" id="IPR006680">
    <property type="entry name" value="Amidohydro-rel"/>
</dbReference>
<dbReference type="InterPro" id="IPR011059">
    <property type="entry name" value="Metal-dep_hydrolase_composite"/>
</dbReference>
<dbReference type="InterPro" id="IPR032466">
    <property type="entry name" value="Metal_Hydrolase"/>
</dbReference>
<dbReference type="NCBIfam" id="TIGR01178">
    <property type="entry name" value="ade"/>
    <property type="match status" value="1"/>
</dbReference>
<dbReference type="PANTHER" id="PTHR11113:SF2">
    <property type="entry name" value="ADENINE DEAMINASE"/>
    <property type="match status" value="1"/>
</dbReference>
<dbReference type="PANTHER" id="PTHR11113">
    <property type="entry name" value="N-ACETYLGLUCOSAMINE-6-PHOSPHATE DEACETYLASE"/>
    <property type="match status" value="1"/>
</dbReference>
<dbReference type="Pfam" id="PF13382">
    <property type="entry name" value="Adenine_deam_C"/>
    <property type="match status" value="1"/>
</dbReference>
<dbReference type="Pfam" id="PF01979">
    <property type="entry name" value="Amidohydro_1"/>
    <property type="match status" value="1"/>
</dbReference>
<dbReference type="SUPFAM" id="SSF51338">
    <property type="entry name" value="Composite domain of metallo-dependent hydrolases"/>
    <property type="match status" value="1"/>
</dbReference>
<dbReference type="SUPFAM" id="SSF51556">
    <property type="entry name" value="Metallo-dependent hydrolases"/>
    <property type="match status" value="1"/>
</dbReference>
<proteinExistence type="inferred from homology"/>